<sequence>MTYENNTHQQNGAGTADIESRFANMSVQNGAAGGAPRKAYVPPHLRSQQQPASLNSSAASFSPRAPAAFNGNGNSNGNGNGPAAPAAPAAFQSFNRGAPRGGAGGWDAPSSGGYGGARNGGGYGGGARNDGFGQWKDGKHVPGPHNPRLQKELFGEEGDGLHQSMGINFDKYGDIPVEATGRDVPEPVTTFTSPPIDAHLLENIKLARYTNPTPVQKYSIPIIKLGRDLMGCAQTGSGKTGGFLFPILSALFTHGPPPPSAAEMAQGGYNRRKAYPSTLILAPTRELVSQIHDEARKFTYRSWVKPAVVYGGADIVTQLRQIERGCDLLSATPGRLVDLMERGRISLSNVRFLVLDEADRMLDMGFEPQIRRIVEGEDMPGVMDRQTLMFSATFPRDIQLLAKDFLKEYVFLSVGRVGSTSENITQKIEYVEDDDKRSVLLDVLASMPSGGLTLIFVETKRMADMLSDFLLRSKIGATSIHGDRTQRERERALELFRSGKTPIMVATAVAARGLDIPNVTHVVNYDLPSDVDDYVHRIGRTGRAGNVGHATAFFNRGNKNIVRDLIELLKEANQEVPQWLEAVARESMFGAGGGSRGGRGRGRGRGGASSFGNRDARTMNGPSSGGGRGFGGGYGGGMGGGLGGSYGAGAAAYGGPPPASNGGSYGGNSSWW</sequence>
<keyword id="KW-0067">ATP-binding</keyword>
<keyword id="KW-0963">Cytoplasm</keyword>
<keyword id="KW-0347">Helicase</keyword>
<keyword id="KW-0378">Hydrolase</keyword>
<keyword id="KW-0396">Initiation factor</keyword>
<keyword id="KW-0547">Nucleotide-binding</keyword>
<keyword id="KW-0648">Protein biosynthesis</keyword>
<keyword id="KW-1185">Reference proteome</keyword>
<keyword id="KW-0694">RNA-binding</keyword>
<proteinExistence type="inferred from homology"/>
<comment type="function">
    <text evidence="1">ATP-binding RNA helicase involved in translation initiation. Remodels RNA in response to ADP and ATP concentrations by facilitating disruption, but also formation of RNA duplexes (By similarity).</text>
</comment>
<comment type="catalytic activity">
    <reaction>
        <text>ATP + H2O = ADP + phosphate + H(+)</text>
        <dbReference type="Rhea" id="RHEA:13065"/>
        <dbReference type="ChEBI" id="CHEBI:15377"/>
        <dbReference type="ChEBI" id="CHEBI:15378"/>
        <dbReference type="ChEBI" id="CHEBI:30616"/>
        <dbReference type="ChEBI" id="CHEBI:43474"/>
        <dbReference type="ChEBI" id="CHEBI:456216"/>
        <dbReference type="EC" id="3.6.4.13"/>
    </reaction>
</comment>
<comment type="subcellular location">
    <subcellularLocation>
        <location evidence="1">Cytoplasm</location>
    </subcellularLocation>
</comment>
<comment type="domain">
    <text>The Q motif is unique to and characteristic of the DEAD box family of RNA helicases and controls ATP binding and hydrolysis.</text>
</comment>
<comment type="similarity">
    <text evidence="5">Belongs to the DEAD box helicase family. DDX3/DED1 subfamily.</text>
</comment>
<gene>
    <name type="primary">DED1</name>
    <name type="ORF">UMAG_04080</name>
</gene>
<evidence type="ECO:0000250" key="1"/>
<evidence type="ECO:0000255" key="2">
    <source>
        <dbReference type="PROSITE-ProRule" id="PRU00541"/>
    </source>
</evidence>
<evidence type="ECO:0000255" key="3">
    <source>
        <dbReference type="PROSITE-ProRule" id="PRU00542"/>
    </source>
</evidence>
<evidence type="ECO:0000256" key="4">
    <source>
        <dbReference type="SAM" id="MobiDB-lite"/>
    </source>
</evidence>
<evidence type="ECO:0000305" key="5"/>
<accession>Q4P733</accession>
<accession>A0A0D1CN17</accession>
<organism>
    <name type="scientific">Mycosarcoma maydis</name>
    <name type="common">Corn smut fungus</name>
    <name type="synonym">Ustilago maydis</name>
    <dbReference type="NCBI Taxonomy" id="5270"/>
    <lineage>
        <taxon>Eukaryota</taxon>
        <taxon>Fungi</taxon>
        <taxon>Dikarya</taxon>
        <taxon>Basidiomycota</taxon>
        <taxon>Ustilaginomycotina</taxon>
        <taxon>Ustilaginomycetes</taxon>
        <taxon>Ustilaginales</taxon>
        <taxon>Ustilaginaceae</taxon>
        <taxon>Mycosarcoma</taxon>
    </lineage>
</organism>
<feature type="chain" id="PRO_0000232162" description="ATP-dependent RNA helicase DED1">
    <location>
        <begin position="1"/>
        <end position="672"/>
    </location>
</feature>
<feature type="domain" description="Helicase ATP-binding" evidence="2">
    <location>
        <begin position="220"/>
        <end position="412"/>
    </location>
</feature>
<feature type="domain" description="Helicase C-terminal" evidence="3">
    <location>
        <begin position="423"/>
        <end position="584"/>
    </location>
</feature>
<feature type="region of interest" description="Disordered" evidence="4">
    <location>
        <begin position="28"/>
        <end position="88"/>
    </location>
</feature>
<feature type="region of interest" description="Disordered" evidence="4">
    <location>
        <begin position="125"/>
        <end position="149"/>
    </location>
</feature>
<feature type="region of interest" description="Disordered" evidence="4">
    <location>
        <begin position="590"/>
        <end position="627"/>
    </location>
</feature>
<feature type="short sequence motif" description="Q motif">
    <location>
        <begin position="189"/>
        <end position="217"/>
    </location>
</feature>
<feature type="short sequence motif" description="DEAD box">
    <location>
        <begin position="356"/>
        <end position="359"/>
    </location>
</feature>
<feature type="compositionally biased region" description="Polar residues" evidence="4">
    <location>
        <begin position="46"/>
        <end position="55"/>
    </location>
</feature>
<feature type="compositionally biased region" description="Low complexity" evidence="4">
    <location>
        <begin position="56"/>
        <end position="73"/>
    </location>
</feature>
<feature type="binding site" evidence="2">
    <location>
        <begin position="233"/>
        <end position="240"/>
    </location>
    <ligand>
        <name>ATP</name>
        <dbReference type="ChEBI" id="CHEBI:30616"/>
    </ligand>
</feature>
<dbReference type="EC" id="3.6.4.13"/>
<dbReference type="EMBL" id="CM003150">
    <property type="protein sequence ID" value="KIS68038.1"/>
    <property type="molecule type" value="Genomic_DNA"/>
</dbReference>
<dbReference type="RefSeq" id="XP_011390514.1">
    <property type="nucleotide sequence ID" value="XM_011392212.1"/>
</dbReference>
<dbReference type="SMR" id="Q4P733"/>
<dbReference type="FunCoup" id="Q4P733">
    <property type="interactions" value="593"/>
</dbReference>
<dbReference type="STRING" id="237631.Q4P733"/>
<dbReference type="EnsemblFungi" id="KIS68038">
    <property type="protein sequence ID" value="KIS68038"/>
    <property type="gene ID" value="UMAG_04080"/>
</dbReference>
<dbReference type="GeneID" id="23564361"/>
<dbReference type="KEGG" id="uma:UMAG_04080"/>
<dbReference type="VEuPathDB" id="FungiDB:UMAG_04080"/>
<dbReference type="eggNOG" id="KOG0335">
    <property type="taxonomic scope" value="Eukaryota"/>
</dbReference>
<dbReference type="HOGENOM" id="CLU_003041_16_3_1"/>
<dbReference type="InParanoid" id="Q4P733"/>
<dbReference type="OMA" id="CYRSWVR"/>
<dbReference type="OrthoDB" id="196131at2759"/>
<dbReference type="Proteomes" id="UP000000561">
    <property type="component" value="Chromosome 11"/>
</dbReference>
<dbReference type="GO" id="GO:0010494">
    <property type="term" value="C:cytoplasmic stress granule"/>
    <property type="evidence" value="ECO:0007669"/>
    <property type="project" value="EnsemblFungi"/>
</dbReference>
<dbReference type="GO" id="GO:0005634">
    <property type="term" value="C:nucleus"/>
    <property type="evidence" value="ECO:0000318"/>
    <property type="project" value="GO_Central"/>
</dbReference>
<dbReference type="GO" id="GO:0005681">
    <property type="term" value="C:spliceosomal complex"/>
    <property type="evidence" value="ECO:0007669"/>
    <property type="project" value="EnsemblFungi"/>
</dbReference>
<dbReference type="GO" id="GO:0005524">
    <property type="term" value="F:ATP binding"/>
    <property type="evidence" value="ECO:0007669"/>
    <property type="project" value="UniProtKB-KW"/>
</dbReference>
<dbReference type="GO" id="GO:0016887">
    <property type="term" value="F:ATP hydrolysis activity"/>
    <property type="evidence" value="ECO:0007669"/>
    <property type="project" value="RHEA"/>
</dbReference>
<dbReference type="GO" id="GO:0031370">
    <property type="term" value="F:eukaryotic initiation factor 4G binding"/>
    <property type="evidence" value="ECO:0007669"/>
    <property type="project" value="EnsemblFungi"/>
</dbReference>
<dbReference type="GO" id="GO:0051880">
    <property type="term" value="F:G-quadruplex DNA binding"/>
    <property type="evidence" value="ECO:0007669"/>
    <property type="project" value="EnsemblFungi"/>
</dbReference>
<dbReference type="GO" id="GO:0002151">
    <property type="term" value="F:G-quadruplex RNA binding"/>
    <property type="evidence" value="ECO:0007669"/>
    <property type="project" value="EnsemblFungi"/>
</dbReference>
<dbReference type="GO" id="GO:0003729">
    <property type="term" value="F:mRNA binding"/>
    <property type="evidence" value="ECO:0000318"/>
    <property type="project" value="GO_Central"/>
</dbReference>
<dbReference type="GO" id="GO:0003724">
    <property type="term" value="F:RNA helicase activity"/>
    <property type="evidence" value="ECO:0000318"/>
    <property type="project" value="GO_Central"/>
</dbReference>
<dbReference type="GO" id="GO:0033592">
    <property type="term" value="F:RNA strand annealing activity"/>
    <property type="evidence" value="ECO:0007669"/>
    <property type="project" value="EnsemblFungi"/>
</dbReference>
<dbReference type="GO" id="GO:0003743">
    <property type="term" value="F:translation initiation factor activity"/>
    <property type="evidence" value="ECO:0007669"/>
    <property type="project" value="UniProtKB-KW"/>
</dbReference>
<dbReference type="GO" id="GO:0002183">
    <property type="term" value="P:cytoplasmic translational initiation"/>
    <property type="evidence" value="ECO:0007669"/>
    <property type="project" value="EnsemblFungi"/>
</dbReference>
<dbReference type="GO" id="GO:1990625">
    <property type="term" value="P:negative regulation of cytoplasmic translational initiation in response to stress"/>
    <property type="evidence" value="ECO:0007669"/>
    <property type="project" value="EnsemblFungi"/>
</dbReference>
<dbReference type="GO" id="GO:1901195">
    <property type="term" value="P:positive regulation of formation of translation preinitiation complex"/>
    <property type="evidence" value="ECO:0007669"/>
    <property type="project" value="EnsemblFungi"/>
</dbReference>
<dbReference type="GO" id="GO:0031047">
    <property type="term" value="P:regulatory ncRNA-mediated gene silencing"/>
    <property type="evidence" value="ECO:0007669"/>
    <property type="project" value="EnsemblFungi"/>
</dbReference>
<dbReference type="GO" id="GO:0000390">
    <property type="term" value="P:spliceosomal complex disassembly"/>
    <property type="evidence" value="ECO:0007669"/>
    <property type="project" value="EnsemblFungi"/>
</dbReference>
<dbReference type="CDD" id="cd17967">
    <property type="entry name" value="DEADc_DDX3_DDX4"/>
    <property type="match status" value="1"/>
</dbReference>
<dbReference type="CDD" id="cd18787">
    <property type="entry name" value="SF2_C_DEAD"/>
    <property type="match status" value="1"/>
</dbReference>
<dbReference type="FunFam" id="3.40.50.300:FF:000160">
    <property type="entry name" value="ATP-dependent RNA helicase DDX3X"/>
    <property type="match status" value="1"/>
</dbReference>
<dbReference type="FunFam" id="3.40.50.300:FF:000008">
    <property type="entry name" value="ATP-dependent RNA helicase RhlB"/>
    <property type="match status" value="1"/>
</dbReference>
<dbReference type="Gene3D" id="3.40.50.300">
    <property type="entry name" value="P-loop containing nucleotide triphosphate hydrolases"/>
    <property type="match status" value="2"/>
</dbReference>
<dbReference type="InterPro" id="IPR011545">
    <property type="entry name" value="DEAD/DEAH_box_helicase_dom"/>
</dbReference>
<dbReference type="InterPro" id="IPR044763">
    <property type="entry name" value="Ded1/Dbp1_DEADc"/>
</dbReference>
<dbReference type="InterPro" id="IPR014001">
    <property type="entry name" value="Helicase_ATP-bd"/>
</dbReference>
<dbReference type="InterPro" id="IPR001650">
    <property type="entry name" value="Helicase_C-like"/>
</dbReference>
<dbReference type="InterPro" id="IPR027417">
    <property type="entry name" value="P-loop_NTPase"/>
</dbReference>
<dbReference type="InterPro" id="IPR000629">
    <property type="entry name" value="RNA-helicase_DEAD-box_CS"/>
</dbReference>
<dbReference type="InterPro" id="IPR014014">
    <property type="entry name" value="RNA_helicase_DEAD_Q_motif"/>
</dbReference>
<dbReference type="PANTHER" id="PTHR47958">
    <property type="entry name" value="ATP-DEPENDENT RNA HELICASE DBP3"/>
    <property type="match status" value="1"/>
</dbReference>
<dbReference type="Pfam" id="PF00270">
    <property type="entry name" value="DEAD"/>
    <property type="match status" value="1"/>
</dbReference>
<dbReference type="Pfam" id="PF00271">
    <property type="entry name" value="Helicase_C"/>
    <property type="match status" value="1"/>
</dbReference>
<dbReference type="SMART" id="SM00487">
    <property type="entry name" value="DEXDc"/>
    <property type="match status" value="1"/>
</dbReference>
<dbReference type="SMART" id="SM00490">
    <property type="entry name" value="HELICc"/>
    <property type="match status" value="1"/>
</dbReference>
<dbReference type="SUPFAM" id="SSF52540">
    <property type="entry name" value="P-loop containing nucleoside triphosphate hydrolases"/>
    <property type="match status" value="1"/>
</dbReference>
<dbReference type="PROSITE" id="PS00039">
    <property type="entry name" value="DEAD_ATP_HELICASE"/>
    <property type="match status" value="1"/>
</dbReference>
<dbReference type="PROSITE" id="PS51192">
    <property type="entry name" value="HELICASE_ATP_BIND_1"/>
    <property type="match status" value="1"/>
</dbReference>
<dbReference type="PROSITE" id="PS51194">
    <property type="entry name" value="HELICASE_CTER"/>
    <property type="match status" value="1"/>
</dbReference>
<dbReference type="PROSITE" id="PS51195">
    <property type="entry name" value="Q_MOTIF"/>
    <property type="match status" value="1"/>
</dbReference>
<reference key="1">
    <citation type="journal article" date="2006" name="Nature">
        <title>Insights from the genome of the biotrophic fungal plant pathogen Ustilago maydis.</title>
        <authorList>
            <person name="Kaemper J."/>
            <person name="Kahmann R."/>
            <person name="Boelker M."/>
            <person name="Ma L.-J."/>
            <person name="Brefort T."/>
            <person name="Saville B.J."/>
            <person name="Banuett F."/>
            <person name="Kronstad J.W."/>
            <person name="Gold S.E."/>
            <person name="Mueller O."/>
            <person name="Perlin M.H."/>
            <person name="Woesten H.A.B."/>
            <person name="de Vries R."/>
            <person name="Ruiz-Herrera J."/>
            <person name="Reynaga-Pena C.G."/>
            <person name="Snetselaar K."/>
            <person name="McCann M."/>
            <person name="Perez-Martin J."/>
            <person name="Feldbruegge M."/>
            <person name="Basse C.W."/>
            <person name="Steinberg G."/>
            <person name="Ibeas J.I."/>
            <person name="Holloman W."/>
            <person name="Guzman P."/>
            <person name="Farman M.L."/>
            <person name="Stajich J.E."/>
            <person name="Sentandreu R."/>
            <person name="Gonzalez-Prieto J.M."/>
            <person name="Kennell J.C."/>
            <person name="Molina L."/>
            <person name="Schirawski J."/>
            <person name="Mendoza-Mendoza A."/>
            <person name="Greilinger D."/>
            <person name="Muench K."/>
            <person name="Roessel N."/>
            <person name="Scherer M."/>
            <person name="Vranes M."/>
            <person name="Ladendorf O."/>
            <person name="Vincon V."/>
            <person name="Fuchs U."/>
            <person name="Sandrock B."/>
            <person name="Meng S."/>
            <person name="Ho E.C.H."/>
            <person name="Cahill M.J."/>
            <person name="Boyce K.J."/>
            <person name="Klose J."/>
            <person name="Klosterman S.J."/>
            <person name="Deelstra H.J."/>
            <person name="Ortiz-Castellanos L."/>
            <person name="Li W."/>
            <person name="Sanchez-Alonso P."/>
            <person name="Schreier P.H."/>
            <person name="Haeuser-Hahn I."/>
            <person name="Vaupel M."/>
            <person name="Koopmann E."/>
            <person name="Friedrich G."/>
            <person name="Voss H."/>
            <person name="Schlueter T."/>
            <person name="Margolis J."/>
            <person name="Platt D."/>
            <person name="Swimmer C."/>
            <person name="Gnirke A."/>
            <person name="Chen F."/>
            <person name="Vysotskaia V."/>
            <person name="Mannhaupt G."/>
            <person name="Gueldener U."/>
            <person name="Muensterkoetter M."/>
            <person name="Haase D."/>
            <person name="Oesterheld M."/>
            <person name="Mewes H.-W."/>
            <person name="Mauceli E.W."/>
            <person name="DeCaprio D."/>
            <person name="Wade C.M."/>
            <person name="Butler J."/>
            <person name="Young S.K."/>
            <person name="Jaffe D.B."/>
            <person name="Calvo S.E."/>
            <person name="Nusbaum C."/>
            <person name="Galagan J.E."/>
            <person name="Birren B.W."/>
        </authorList>
    </citation>
    <scope>NUCLEOTIDE SEQUENCE [LARGE SCALE GENOMIC DNA]</scope>
    <source>
        <strain>DSM 14603 / FGSC 9021 / UM521</strain>
    </source>
</reference>
<reference key="2">
    <citation type="submission" date="2014-09" db="EMBL/GenBank/DDBJ databases">
        <authorList>
            <person name="Gueldener U."/>
            <person name="Muensterkoetter M."/>
            <person name="Walter M.C."/>
            <person name="Mannhaupt G."/>
            <person name="Kahmann R."/>
        </authorList>
    </citation>
    <scope>GENOME REANNOTATION</scope>
    <source>
        <strain>DSM 14603 / FGSC 9021 / UM521</strain>
    </source>
</reference>
<name>DED1_MYCMD</name>
<protein>
    <recommendedName>
        <fullName>ATP-dependent RNA helicase DED1</fullName>
        <ecNumber>3.6.4.13</ecNumber>
    </recommendedName>
</protein>